<accession>Q7U5U5</accession>
<comment type="function">
    <text evidence="1">Involved in the regulation of the intracellular balance of NAD and NADP, and is a key enzyme in the biosynthesis of NADP. Catalyzes specifically the phosphorylation on 2'-hydroxyl of the adenosine moiety of NAD to yield NADP.</text>
</comment>
<comment type="catalytic activity">
    <reaction evidence="1">
        <text>NAD(+) + ATP = ADP + NADP(+) + H(+)</text>
        <dbReference type="Rhea" id="RHEA:18629"/>
        <dbReference type="ChEBI" id="CHEBI:15378"/>
        <dbReference type="ChEBI" id="CHEBI:30616"/>
        <dbReference type="ChEBI" id="CHEBI:57540"/>
        <dbReference type="ChEBI" id="CHEBI:58349"/>
        <dbReference type="ChEBI" id="CHEBI:456216"/>
        <dbReference type="EC" id="2.7.1.23"/>
    </reaction>
</comment>
<comment type="cofactor">
    <cofactor evidence="1">
        <name>a divalent metal cation</name>
        <dbReference type="ChEBI" id="CHEBI:60240"/>
    </cofactor>
</comment>
<comment type="subcellular location">
    <subcellularLocation>
        <location evidence="1">Cytoplasm</location>
    </subcellularLocation>
</comment>
<comment type="similarity">
    <text evidence="1">Belongs to the NAD kinase family.</text>
</comment>
<protein>
    <recommendedName>
        <fullName evidence="1">NAD kinase 2</fullName>
        <ecNumber evidence="1">2.7.1.23</ecNumber>
    </recommendedName>
    <alternativeName>
        <fullName evidence="1">ATP-dependent NAD kinase 2</fullName>
    </alternativeName>
</protein>
<feature type="chain" id="PRO_0000229703" description="NAD kinase 2">
    <location>
        <begin position="1"/>
        <end position="302"/>
    </location>
</feature>
<feature type="active site" description="Proton acceptor" evidence="1">
    <location>
        <position position="78"/>
    </location>
</feature>
<feature type="binding site" evidence="1">
    <location>
        <begin position="78"/>
        <end position="79"/>
    </location>
    <ligand>
        <name>NAD(+)</name>
        <dbReference type="ChEBI" id="CHEBI:57540"/>
    </ligand>
</feature>
<feature type="binding site" evidence="1">
    <location>
        <begin position="152"/>
        <end position="153"/>
    </location>
    <ligand>
        <name>NAD(+)</name>
        <dbReference type="ChEBI" id="CHEBI:57540"/>
    </ligand>
</feature>
<feature type="binding site" evidence="1">
    <location>
        <position position="182"/>
    </location>
    <ligand>
        <name>NAD(+)</name>
        <dbReference type="ChEBI" id="CHEBI:57540"/>
    </ligand>
</feature>
<feature type="binding site" evidence="1">
    <location>
        <begin position="193"/>
        <end position="198"/>
    </location>
    <ligand>
        <name>NAD(+)</name>
        <dbReference type="ChEBI" id="CHEBI:57540"/>
    </ligand>
</feature>
<feature type="binding site" evidence="1">
    <location>
        <position position="217"/>
    </location>
    <ligand>
        <name>NAD(+)</name>
        <dbReference type="ChEBI" id="CHEBI:57540"/>
    </ligand>
</feature>
<evidence type="ECO:0000255" key="1">
    <source>
        <dbReference type="HAMAP-Rule" id="MF_00361"/>
    </source>
</evidence>
<reference key="1">
    <citation type="journal article" date="2003" name="Nature">
        <title>The genome of a motile marine Synechococcus.</title>
        <authorList>
            <person name="Palenik B."/>
            <person name="Brahamsha B."/>
            <person name="Larimer F.W."/>
            <person name="Land M.L."/>
            <person name="Hauser L."/>
            <person name="Chain P."/>
            <person name="Lamerdin J.E."/>
            <person name="Regala W."/>
            <person name="Allen E.E."/>
            <person name="McCarren J."/>
            <person name="Paulsen I.T."/>
            <person name="Dufresne A."/>
            <person name="Partensky F."/>
            <person name="Webb E.A."/>
            <person name="Waterbury J."/>
        </authorList>
    </citation>
    <scope>NUCLEOTIDE SEQUENCE [LARGE SCALE GENOMIC DNA]</scope>
    <source>
        <strain>WH8102</strain>
    </source>
</reference>
<dbReference type="EC" id="2.7.1.23" evidence="1"/>
<dbReference type="EMBL" id="BX569693">
    <property type="protein sequence ID" value="CAE08114.1"/>
    <property type="molecule type" value="Genomic_DNA"/>
</dbReference>
<dbReference type="RefSeq" id="WP_011128463.1">
    <property type="nucleotide sequence ID" value="NC_005070.1"/>
</dbReference>
<dbReference type="SMR" id="Q7U5U5"/>
<dbReference type="STRING" id="84588.SYNW1599"/>
<dbReference type="KEGG" id="syw:SYNW1599"/>
<dbReference type="eggNOG" id="COG0061">
    <property type="taxonomic scope" value="Bacteria"/>
</dbReference>
<dbReference type="HOGENOM" id="CLU_008831_0_1_3"/>
<dbReference type="Proteomes" id="UP000001422">
    <property type="component" value="Chromosome"/>
</dbReference>
<dbReference type="GO" id="GO:0005737">
    <property type="term" value="C:cytoplasm"/>
    <property type="evidence" value="ECO:0007669"/>
    <property type="project" value="UniProtKB-SubCell"/>
</dbReference>
<dbReference type="GO" id="GO:0005524">
    <property type="term" value="F:ATP binding"/>
    <property type="evidence" value="ECO:0007669"/>
    <property type="project" value="UniProtKB-KW"/>
</dbReference>
<dbReference type="GO" id="GO:0046872">
    <property type="term" value="F:metal ion binding"/>
    <property type="evidence" value="ECO:0007669"/>
    <property type="project" value="UniProtKB-UniRule"/>
</dbReference>
<dbReference type="GO" id="GO:0051287">
    <property type="term" value="F:NAD binding"/>
    <property type="evidence" value="ECO:0007669"/>
    <property type="project" value="UniProtKB-ARBA"/>
</dbReference>
<dbReference type="GO" id="GO:0003951">
    <property type="term" value="F:NAD+ kinase activity"/>
    <property type="evidence" value="ECO:0007669"/>
    <property type="project" value="UniProtKB-UniRule"/>
</dbReference>
<dbReference type="GO" id="GO:0019674">
    <property type="term" value="P:NAD metabolic process"/>
    <property type="evidence" value="ECO:0007669"/>
    <property type="project" value="InterPro"/>
</dbReference>
<dbReference type="GO" id="GO:0006741">
    <property type="term" value="P:NADP biosynthetic process"/>
    <property type="evidence" value="ECO:0007669"/>
    <property type="project" value="UniProtKB-UniRule"/>
</dbReference>
<dbReference type="Gene3D" id="3.40.50.10330">
    <property type="entry name" value="Probable inorganic polyphosphate/atp-NAD kinase, domain 1"/>
    <property type="match status" value="1"/>
</dbReference>
<dbReference type="Gene3D" id="2.60.200.30">
    <property type="entry name" value="Probable inorganic polyphosphate/atp-NAD kinase, domain 2"/>
    <property type="match status" value="1"/>
</dbReference>
<dbReference type="HAMAP" id="MF_00361">
    <property type="entry name" value="NAD_kinase"/>
    <property type="match status" value="1"/>
</dbReference>
<dbReference type="InterPro" id="IPR017438">
    <property type="entry name" value="ATP-NAD_kinase_N"/>
</dbReference>
<dbReference type="InterPro" id="IPR017437">
    <property type="entry name" value="ATP-NAD_kinase_PpnK-typ_C"/>
</dbReference>
<dbReference type="InterPro" id="IPR016064">
    <property type="entry name" value="NAD/diacylglycerol_kinase_sf"/>
</dbReference>
<dbReference type="InterPro" id="IPR002504">
    <property type="entry name" value="NADK"/>
</dbReference>
<dbReference type="NCBIfam" id="NF002732">
    <property type="entry name" value="PRK02649.1"/>
    <property type="match status" value="1"/>
</dbReference>
<dbReference type="PANTHER" id="PTHR20275">
    <property type="entry name" value="NAD KINASE"/>
    <property type="match status" value="1"/>
</dbReference>
<dbReference type="PANTHER" id="PTHR20275:SF13">
    <property type="entry name" value="NAD KINASE 2"/>
    <property type="match status" value="1"/>
</dbReference>
<dbReference type="Pfam" id="PF01513">
    <property type="entry name" value="NAD_kinase"/>
    <property type="match status" value="1"/>
</dbReference>
<dbReference type="Pfam" id="PF20143">
    <property type="entry name" value="NAD_kinase_C"/>
    <property type="match status" value="1"/>
</dbReference>
<dbReference type="SUPFAM" id="SSF111331">
    <property type="entry name" value="NAD kinase/diacylglycerol kinase-like"/>
    <property type="match status" value="1"/>
</dbReference>
<sequence length="302" mass="32570">MPRIGLIVNDGKPLAVQTADTIQQRLELAGHAVVRASSSGGMVGFANPDQHLRLLGYSACVPEGFNNSMALAIVLGGDGTVLSAARQTAPVGVPILTINTGHLGFLAEAYLGDLDRALEVVLTEQWTIEERSNLVVSVMRGDQRRWEALSLNEMALHREPLTSMCHFEIAIGRHAPVDIAADGVILSTPTGSTAYALSAGGPVISPDCPVLQLTPIAPHSLASRALVFSDREPVTVFPATPERLMMVVDGSAGCYVWPEDRVLIRRSEHPVRFVRLVDHEFFQVLRNKLGWGLPHIAKPDKG</sequence>
<gene>
    <name evidence="1" type="primary">nadK2</name>
    <name type="ordered locus">SYNW1599</name>
</gene>
<keyword id="KW-0067">ATP-binding</keyword>
<keyword id="KW-0963">Cytoplasm</keyword>
<keyword id="KW-0418">Kinase</keyword>
<keyword id="KW-0520">NAD</keyword>
<keyword id="KW-0521">NADP</keyword>
<keyword id="KW-0547">Nucleotide-binding</keyword>
<keyword id="KW-0808">Transferase</keyword>
<name>NADK2_PARMW</name>
<organism>
    <name type="scientific">Parasynechococcus marenigrum (strain WH8102)</name>
    <dbReference type="NCBI Taxonomy" id="84588"/>
    <lineage>
        <taxon>Bacteria</taxon>
        <taxon>Bacillati</taxon>
        <taxon>Cyanobacteriota</taxon>
        <taxon>Cyanophyceae</taxon>
        <taxon>Synechococcales</taxon>
        <taxon>Prochlorococcaceae</taxon>
        <taxon>Parasynechococcus</taxon>
        <taxon>Parasynechococcus marenigrum</taxon>
    </lineage>
</organism>
<proteinExistence type="inferred from homology"/>